<protein>
    <recommendedName>
        <fullName evidence="1">4-hydroxy-3-methylbut-2-en-1-yl diphosphate synthase (flavodoxin)</fullName>
        <ecNumber evidence="1">1.17.7.3</ecNumber>
    </recommendedName>
    <alternativeName>
        <fullName evidence="1">1-hydroxy-2-methyl-2-(E)-butenyl 4-diphosphate synthase</fullName>
    </alternativeName>
</protein>
<keyword id="KW-0004">4Fe-4S</keyword>
<keyword id="KW-0408">Iron</keyword>
<keyword id="KW-0411">Iron-sulfur</keyword>
<keyword id="KW-0414">Isoprene biosynthesis</keyword>
<keyword id="KW-0479">Metal-binding</keyword>
<keyword id="KW-0560">Oxidoreductase</keyword>
<comment type="function">
    <text evidence="1">Converts 2C-methyl-D-erythritol 2,4-cyclodiphosphate (ME-2,4cPP) into 1-hydroxy-2-methyl-2-(E)-butenyl 4-diphosphate.</text>
</comment>
<comment type="catalytic activity">
    <reaction evidence="1">
        <text>(2E)-4-hydroxy-3-methylbut-2-enyl diphosphate + oxidized [flavodoxin] + H2O + 2 H(+) = 2-C-methyl-D-erythritol 2,4-cyclic diphosphate + reduced [flavodoxin]</text>
        <dbReference type="Rhea" id="RHEA:43604"/>
        <dbReference type="Rhea" id="RHEA-COMP:10622"/>
        <dbReference type="Rhea" id="RHEA-COMP:10623"/>
        <dbReference type="ChEBI" id="CHEBI:15377"/>
        <dbReference type="ChEBI" id="CHEBI:15378"/>
        <dbReference type="ChEBI" id="CHEBI:57618"/>
        <dbReference type="ChEBI" id="CHEBI:58210"/>
        <dbReference type="ChEBI" id="CHEBI:58483"/>
        <dbReference type="ChEBI" id="CHEBI:128753"/>
        <dbReference type="EC" id="1.17.7.3"/>
    </reaction>
</comment>
<comment type="cofactor">
    <cofactor evidence="1">
        <name>[4Fe-4S] cluster</name>
        <dbReference type="ChEBI" id="CHEBI:49883"/>
    </cofactor>
    <text evidence="1">Binds 1 [4Fe-4S] cluster.</text>
</comment>
<comment type="pathway">
    <text evidence="1">Isoprenoid biosynthesis; isopentenyl diphosphate biosynthesis via DXP pathway; isopentenyl diphosphate from 1-deoxy-D-xylulose 5-phosphate: step 5/6.</text>
</comment>
<comment type="similarity">
    <text evidence="1">Belongs to the IspG family.</text>
</comment>
<gene>
    <name evidence="1" type="primary">ispG</name>
    <name type="ordered locus">HPAG1_0608</name>
</gene>
<proteinExistence type="inferred from homology"/>
<evidence type="ECO:0000255" key="1">
    <source>
        <dbReference type="HAMAP-Rule" id="MF_00159"/>
    </source>
</evidence>
<feature type="chain" id="PRO_1000011475" description="4-hydroxy-3-methylbut-2-en-1-yl diphosphate synthase (flavodoxin)">
    <location>
        <begin position="1"/>
        <end position="359"/>
    </location>
</feature>
<feature type="binding site" evidence="1">
    <location>
        <position position="264"/>
    </location>
    <ligand>
        <name>[4Fe-4S] cluster</name>
        <dbReference type="ChEBI" id="CHEBI:49883"/>
    </ligand>
</feature>
<feature type="binding site" evidence="1">
    <location>
        <position position="267"/>
    </location>
    <ligand>
        <name>[4Fe-4S] cluster</name>
        <dbReference type="ChEBI" id="CHEBI:49883"/>
    </ligand>
</feature>
<feature type="binding site" evidence="1">
    <location>
        <position position="299"/>
    </location>
    <ligand>
        <name>[4Fe-4S] cluster</name>
        <dbReference type="ChEBI" id="CHEBI:49883"/>
    </ligand>
</feature>
<feature type="binding site" evidence="1">
    <location>
        <position position="306"/>
    </location>
    <ligand>
        <name>[4Fe-4S] cluster</name>
        <dbReference type="ChEBI" id="CHEBI:49883"/>
    </ligand>
</feature>
<organism>
    <name type="scientific">Helicobacter pylori (strain HPAG1)</name>
    <dbReference type="NCBI Taxonomy" id="357544"/>
    <lineage>
        <taxon>Bacteria</taxon>
        <taxon>Pseudomonadati</taxon>
        <taxon>Campylobacterota</taxon>
        <taxon>Epsilonproteobacteria</taxon>
        <taxon>Campylobacterales</taxon>
        <taxon>Helicobacteraceae</taxon>
        <taxon>Helicobacter</taxon>
    </lineage>
</organism>
<name>ISPG_HELPH</name>
<accession>Q1CTP7</accession>
<dbReference type="EC" id="1.17.7.3" evidence="1"/>
<dbReference type="EMBL" id="CP000241">
    <property type="protein sequence ID" value="ABF84675.1"/>
    <property type="molecule type" value="Genomic_DNA"/>
</dbReference>
<dbReference type="RefSeq" id="WP_000892456.1">
    <property type="nucleotide sequence ID" value="NC_008086.1"/>
</dbReference>
<dbReference type="SMR" id="Q1CTP7"/>
<dbReference type="KEGG" id="hpa:HPAG1_0608"/>
<dbReference type="HOGENOM" id="CLU_042258_0_0_7"/>
<dbReference type="UniPathway" id="UPA00056">
    <property type="reaction ID" value="UER00096"/>
</dbReference>
<dbReference type="GO" id="GO:0051539">
    <property type="term" value="F:4 iron, 4 sulfur cluster binding"/>
    <property type="evidence" value="ECO:0007669"/>
    <property type="project" value="UniProtKB-UniRule"/>
</dbReference>
<dbReference type="GO" id="GO:0046429">
    <property type="term" value="F:4-hydroxy-3-methylbut-2-en-1-yl diphosphate synthase activity (ferredoxin)"/>
    <property type="evidence" value="ECO:0007669"/>
    <property type="project" value="UniProtKB-UniRule"/>
</dbReference>
<dbReference type="GO" id="GO:0141197">
    <property type="term" value="F:4-hydroxy-3-methylbut-2-enyl-diphosphate synthase activity (flavodoxin)"/>
    <property type="evidence" value="ECO:0007669"/>
    <property type="project" value="UniProtKB-EC"/>
</dbReference>
<dbReference type="GO" id="GO:0005506">
    <property type="term" value="F:iron ion binding"/>
    <property type="evidence" value="ECO:0007669"/>
    <property type="project" value="InterPro"/>
</dbReference>
<dbReference type="GO" id="GO:0019288">
    <property type="term" value="P:isopentenyl diphosphate biosynthetic process, methylerythritol 4-phosphate pathway"/>
    <property type="evidence" value="ECO:0007669"/>
    <property type="project" value="UniProtKB-UniRule"/>
</dbReference>
<dbReference type="GO" id="GO:0016114">
    <property type="term" value="P:terpenoid biosynthetic process"/>
    <property type="evidence" value="ECO:0007669"/>
    <property type="project" value="InterPro"/>
</dbReference>
<dbReference type="FunFam" id="3.20.20.20:FF:000001">
    <property type="entry name" value="4-hydroxy-3-methylbut-2-en-1-yl diphosphate synthase (flavodoxin)"/>
    <property type="match status" value="1"/>
</dbReference>
<dbReference type="FunFam" id="3.30.413.10:FF:000015">
    <property type="entry name" value="4-hydroxy-3-methylbut-2-en-1-yl diphosphate synthase (flavodoxin)"/>
    <property type="match status" value="1"/>
</dbReference>
<dbReference type="Gene3D" id="3.20.20.20">
    <property type="entry name" value="Dihydropteroate synthase-like"/>
    <property type="match status" value="1"/>
</dbReference>
<dbReference type="Gene3D" id="3.30.413.10">
    <property type="entry name" value="Sulfite Reductase Hemoprotein, domain 1"/>
    <property type="match status" value="1"/>
</dbReference>
<dbReference type="HAMAP" id="MF_00159">
    <property type="entry name" value="IspG"/>
    <property type="match status" value="1"/>
</dbReference>
<dbReference type="InterPro" id="IPR011005">
    <property type="entry name" value="Dihydropteroate_synth-like_sf"/>
</dbReference>
<dbReference type="InterPro" id="IPR036849">
    <property type="entry name" value="Enolase-like_C_sf"/>
</dbReference>
<dbReference type="InterPro" id="IPR016425">
    <property type="entry name" value="IspG_bac"/>
</dbReference>
<dbReference type="InterPro" id="IPR004588">
    <property type="entry name" value="IspG_bac-typ"/>
</dbReference>
<dbReference type="InterPro" id="IPR045854">
    <property type="entry name" value="NO2/SO3_Rdtase_4Fe4S_sf"/>
</dbReference>
<dbReference type="NCBIfam" id="TIGR00612">
    <property type="entry name" value="ispG_gcpE"/>
    <property type="match status" value="1"/>
</dbReference>
<dbReference type="NCBIfam" id="NF001540">
    <property type="entry name" value="PRK00366.1"/>
    <property type="match status" value="1"/>
</dbReference>
<dbReference type="PANTHER" id="PTHR30454">
    <property type="entry name" value="4-HYDROXY-3-METHYLBUT-2-EN-1-YL DIPHOSPHATE SYNTHASE"/>
    <property type="match status" value="1"/>
</dbReference>
<dbReference type="PANTHER" id="PTHR30454:SF0">
    <property type="entry name" value="4-HYDROXY-3-METHYLBUT-2-EN-1-YL DIPHOSPHATE SYNTHASE (FERREDOXIN), CHLOROPLASTIC"/>
    <property type="match status" value="1"/>
</dbReference>
<dbReference type="Pfam" id="PF04551">
    <property type="entry name" value="GcpE"/>
    <property type="match status" value="1"/>
</dbReference>
<dbReference type="PIRSF" id="PIRSF004640">
    <property type="entry name" value="IspG"/>
    <property type="match status" value="1"/>
</dbReference>
<dbReference type="SUPFAM" id="SSF51604">
    <property type="entry name" value="Enolase C-terminal domain-like"/>
    <property type="match status" value="1"/>
</dbReference>
<dbReference type="SUPFAM" id="SSF56014">
    <property type="entry name" value="Nitrite and sulphite reductase 4Fe-4S domain-like"/>
    <property type="match status" value="1"/>
</dbReference>
<reference key="1">
    <citation type="journal article" date="2006" name="Proc. Natl. Acad. Sci. U.S.A.">
        <title>The complete genome sequence of a chronic atrophic gastritis Helicobacter pylori strain: evolution during disease progression.</title>
        <authorList>
            <person name="Oh J.D."/>
            <person name="Kling-Baeckhed H."/>
            <person name="Giannakis M."/>
            <person name="Xu J."/>
            <person name="Fulton R.S."/>
            <person name="Fulton L.A."/>
            <person name="Cordum H.S."/>
            <person name="Wang C."/>
            <person name="Elliott G."/>
            <person name="Edwards J."/>
            <person name="Mardis E.R."/>
            <person name="Engstrand L.G."/>
            <person name="Gordon J.I."/>
        </authorList>
    </citation>
    <scope>NUCLEOTIDE SEQUENCE [LARGE SCALE GENOMIC DNA]</scope>
    <source>
        <strain>HPAG1</strain>
    </source>
</reference>
<sequence>MLENRVKTKQIFIGGVAIGGDAPISTQSMTFSKTADIESTKNQIDRLKLAGADLVRVAVSNEKDALALKELKKVSPLPLIADIHFHYKFALIAAQSVDAIRINPGNIGSKDKIKAVVDACKEKNIPIRIGVNAGSLEKQFDQKYGPTPKGMVESALYNAKLLEDLDFTDFKISLKASDVMRTIEAYRMLRPLVIYPFHLGVTEAGNLFSSSIKSAMALGGLLMEGIGDTMRVSITGELENEIKVARAILRHSGRLKEGINWISCPTCGRIEANLVDMASKVEKRLSHIKTPLDISVMGCVVNALGEAKHADMAIAFGNRSGLIIKEGKVIHKLAEKDLFETFVIEVENLAKEREKSLKD</sequence>